<evidence type="ECO:0000305" key="1"/>
<evidence type="ECO:0007829" key="2">
    <source>
        <dbReference type="PDB" id="1B06"/>
    </source>
</evidence>
<accession>Q08713</accession>
<accession>Q4JC65</accession>
<keyword id="KW-0002">3D-structure</keyword>
<keyword id="KW-0963">Cytoplasm</keyword>
<keyword id="KW-0408">Iron</keyword>
<keyword id="KW-0479">Metal-binding</keyword>
<keyword id="KW-0560">Oxidoreductase</keyword>
<keyword id="KW-1185">Reference proteome</keyword>
<feature type="initiator methionine" description="Removed">
    <location>
        <position position="1"/>
    </location>
</feature>
<feature type="chain" id="PRO_0000160009" description="Superoxide dismutase [Fe]">
    <location>
        <begin position="2"/>
        <end position="211"/>
    </location>
</feature>
<feature type="binding site">
    <location>
        <position position="34"/>
    </location>
    <ligand>
        <name>Fe cation</name>
        <dbReference type="ChEBI" id="CHEBI:24875"/>
    </ligand>
</feature>
<feature type="binding site">
    <location>
        <position position="85"/>
    </location>
    <ligand>
        <name>Fe cation</name>
        <dbReference type="ChEBI" id="CHEBI:24875"/>
    </ligand>
</feature>
<feature type="binding site">
    <location>
        <position position="171"/>
    </location>
    <ligand>
        <name>Fe cation</name>
        <dbReference type="ChEBI" id="CHEBI:24875"/>
    </ligand>
</feature>
<feature type="binding site">
    <location>
        <position position="175"/>
    </location>
    <ligand>
        <name>Fe cation</name>
        <dbReference type="ChEBI" id="CHEBI:24875"/>
    </ligand>
</feature>
<feature type="turn" evidence="2">
    <location>
        <begin position="19"/>
        <end position="25"/>
    </location>
</feature>
<feature type="helix" evidence="2">
    <location>
        <begin position="28"/>
        <end position="36"/>
    </location>
</feature>
<feature type="helix" evidence="2">
    <location>
        <begin position="38"/>
        <end position="58"/>
    </location>
</feature>
<feature type="helix" evidence="2">
    <location>
        <begin position="68"/>
        <end position="90"/>
    </location>
</feature>
<feature type="turn" evidence="2">
    <location>
        <begin position="95"/>
        <end position="97"/>
    </location>
</feature>
<feature type="helix" evidence="2">
    <location>
        <begin position="104"/>
        <end position="114"/>
    </location>
</feature>
<feature type="helix" evidence="2">
    <location>
        <begin position="117"/>
        <end position="130"/>
    </location>
</feature>
<feature type="strand" evidence="2">
    <location>
        <begin position="133"/>
        <end position="141"/>
    </location>
</feature>
<feature type="turn" evidence="2">
    <location>
        <begin position="143"/>
        <end position="145"/>
    </location>
</feature>
<feature type="strand" evidence="2">
    <location>
        <begin position="148"/>
        <end position="154"/>
    </location>
</feature>
<feature type="turn" evidence="2">
    <location>
        <begin position="155"/>
        <end position="157"/>
    </location>
</feature>
<feature type="strand" evidence="2">
    <location>
        <begin position="166"/>
        <end position="171"/>
    </location>
</feature>
<feature type="helix" evidence="2">
    <location>
        <begin position="174"/>
        <end position="176"/>
    </location>
</feature>
<feature type="helix" evidence="2">
    <location>
        <begin position="178"/>
        <end position="181"/>
    </location>
</feature>
<feature type="helix" evidence="2">
    <location>
        <begin position="185"/>
        <end position="192"/>
    </location>
</feature>
<feature type="helix" evidence="2">
    <location>
        <begin position="193"/>
        <end position="195"/>
    </location>
</feature>
<feature type="helix" evidence="2">
    <location>
        <begin position="198"/>
        <end position="206"/>
    </location>
</feature>
<feature type="turn" evidence="2">
    <location>
        <begin position="207"/>
        <end position="210"/>
    </location>
</feature>
<dbReference type="EC" id="1.15.1.1"/>
<dbReference type="EMBL" id="X63386">
    <property type="protein sequence ID" value="CAA44993.1"/>
    <property type="molecule type" value="Genomic_DNA"/>
</dbReference>
<dbReference type="EMBL" id="CP000077">
    <property type="protein sequence ID" value="AAY79614.1"/>
    <property type="molecule type" value="Genomic_DNA"/>
</dbReference>
<dbReference type="PIR" id="S34616">
    <property type="entry name" value="S34616"/>
</dbReference>
<dbReference type="RefSeq" id="WP_011277115.1">
    <property type="nucleotide sequence ID" value="NC_007181.1"/>
</dbReference>
<dbReference type="PDB" id="1B06">
    <property type="method" value="X-ray"/>
    <property type="resolution" value="2.20 A"/>
    <property type="chains" value="A/B/C/D/E/F=2-211"/>
</dbReference>
<dbReference type="PDBsum" id="1B06"/>
<dbReference type="SMR" id="Q08713"/>
<dbReference type="STRING" id="330779.Saci_0195"/>
<dbReference type="GeneID" id="14550723"/>
<dbReference type="KEGG" id="sai:Saci_0195"/>
<dbReference type="PATRIC" id="fig|330779.12.peg.187"/>
<dbReference type="eggNOG" id="arCOG04147">
    <property type="taxonomic scope" value="Archaea"/>
</dbReference>
<dbReference type="HOGENOM" id="CLU_031625_2_2_2"/>
<dbReference type="BRENDA" id="1.15.1.1">
    <property type="organism ID" value="6160"/>
</dbReference>
<dbReference type="EvolutionaryTrace" id="Q08713"/>
<dbReference type="Proteomes" id="UP000001018">
    <property type="component" value="Chromosome"/>
</dbReference>
<dbReference type="GO" id="GO:0005737">
    <property type="term" value="C:cytoplasm"/>
    <property type="evidence" value="ECO:0007669"/>
    <property type="project" value="UniProtKB-SubCell"/>
</dbReference>
<dbReference type="GO" id="GO:0046872">
    <property type="term" value="F:metal ion binding"/>
    <property type="evidence" value="ECO:0007669"/>
    <property type="project" value="UniProtKB-KW"/>
</dbReference>
<dbReference type="GO" id="GO:0004784">
    <property type="term" value="F:superoxide dismutase activity"/>
    <property type="evidence" value="ECO:0007669"/>
    <property type="project" value="UniProtKB-EC"/>
</dbReference>
<dbReference type="FunFam" id="3.55.40.20:FF:000004">
    <property type="entry name" value="Superoxide dismutase [Fe]"/>
    <property type="match status" value="1"/>
</dbReference>
<dbReference type="Gene3D" id="1.10.287.990">
    <property type="entry name" value="Fe,Mn superoxide dismutase (SOD) domain"/>
    <property type="match status" value="1"/>
</dbReference>
<dbReference type="Gene3D" id="3.55.40.20">
    <property type="entry name" value="Iron/manganese superoxide dismutase, C-terminal domain"/>
    <property type="match status" value="1"/>
</dbReference>
<dbReference type="InterPro" id="IPR050265">
    <property type="entry name" value="Fe/Mn_Superoxide_Dismutase"/>
</dbReference>
<dbReference type="InterPro" id="IPR001189">
    <property type="entry name" value="Mn/Fe_SOD"/>
</dbReference>
<dbReference type="InterPro" id="IPR019833">
    <property type="entry name" value="Mn/Fe_SOD_BS"/>
</dbReference>
<dbReference type="InterPro" id="IPR019832">
    <property type="entry name" value="Mn/Fe_SOD_C"/>
</dbReference>
<dbReference type="InterPro" id="IPR019831">
    <property type="entry name" value="Mn/Fe_SOD_N"/>
</dbReference>
<dbReference type="InterPro" id="IPR036324">
    <property type="entry name" value="Mn/Fe_SOD_N_sf"/>
</dbReference>
<dbReference type="InterPro" id="IPR036314">
    <property type="entry name" value="SOD_C_sf"/>
</dbReference>
<dbReference type="PANTHER" id="PTHR11404">
    <property type="entry name" value="SUPEROXIDE DISMUTASE 2"/>
    <property type="match status" value="1"/>
</dbReference>
<dbReference type="PANTHER" id="PTHR11404:SF6">
    <property type="entry name" value="SUPEROXIDE DISMUTASE [MN], MITOCHONDRIAL"/>
    <property type="match status" value="1"/>
</dbReference>
<dbReference type="Pfam" id="PF02777">
    <property type="entry name" value="Sod_Fe_C"/>
    <property type="match status" value="1"/>
</dbReference>
<dbReference type="Pfam" id="PF00081">
    <property type="entry name" value="Sod_Fe_N"/>
    <property type="match status" value="1"/>
</dbReference>
<dbReference type="PIRSF" id="PIRSF000349">
    <property type="entry name" value="SODismutase"/>
    <property type="match status" value="1"/>
</dbReference>
<dbReference type="PRINTS" id="PR01703">
    <property type="entry name" value="MNSODISMTASE"/>
</dbReference>
<dbReference type="SUPFAM" id="SSF54719">
    <property type="entry name" value="Fe,Mn superoxide dismutase (SOD), C-terminal domain"/>
    <property type="match status" value="1"/>
</dbReference>
<dbReference type="SUPFAM" id="SSF46609">
    <property type="entry name" value="Fe,Mn superoxide dismutase (SOD), N-terminal domain"/>
    <property type="match status" value="1"/>
</dbReference>
<dbReference type="PROSITE" id="PS00088">
    <property type="entry name" value="SOD_MN"/>
    <property type="match status" value="1"/>
</dbReference>
<reference key="1">
    <citation type="journal article" date="1993" name="Biochim. Biophys. Acta">
        <title>Nucleotide sequence, transcription and phylogeny of the gene encoding the superoxide dismutase of Sulfolobus acidocaldarius.</title>
        <authorList>
            <person name="Klenk H.-P."/>
            <person name="Schleper C."/>
            <person name="Schwass V."/>
            <person name="Brudler R."/>
        </authorList>
    </citation>
    <scope>NUCLEOTIDE SEQUENCE [GENOMIC DNA]</scope>
</reference>
<reference key="2">
    <citation type="journal article" date="2005" name="J. Bacteriol.">
        <title>The genome of Sulfolobus acidocaldarius, a model organism of the Crenarchaeota.</title>
        <authorList>
            <person name="Chen L."/>
            <person name="Bruegger K."/>
            <person name="Skovgaard M."/>
            <person name="Redder P."/>
            <person name="She Q."/>
            <person name="Torarinsson E."/>
            <person name="Greve B."/>
            <person name="Awayez M."/>
            <person name="Zibat A."/>
            <person name="Klenk H.-P."/>
            <person name="Garrett R.A."/>
        </authorList>
    </citation>
    <scope>NUCLEOTIDE SEQUENCE [LARGE SCALE GENOMIC DNA]</scope>
    <source>
        <strain>ATCC 33909 / DSM 639 / JCM 8929 / NBRC 15157 / NCIMB 11770</strain>
    </source>
</reference>
<reference key="3">
    <citation type="journal article" date="1999" name="J. Mol. Biol.">
        <title>Refined crystal structure of a superoxide dismutase from the hyperthermophilic archaeon Sulfolobus acidocaldarius at 2.2-A resolution.</title>
        <authorList>
            <person name="Knapp S."/>
            <person name="Kardinahl S."/>
            <person name="Hellgren N."/>
            <person name="Tibbelin G."/>
            <person name="Schaefer G."/>
            <person name="Ladenstein R."/>
        </authorList>
    </citation>
    <scope>X-RAY CRYSTALLOGRAPHY (2.2 ANGSTROMS)</scope>
    <source>
        <strain>ATCC 33909 / DSM 639 / JCM 8929 / NBRC 15157 / NCIMB 11770</strain>
    </source>
</reference>
<sequence>MTQVIQLKRYEFPQLPYKVDALEPYISKDIIDVHYNGHHKGYVNGANSLLDRLEKLIKGDLPQGQYDLQGILRGLTFNINGHKLHAIYWNNMAPAGKGGGKPGGALADLINKQYGSFDRFKQVFSESANSLPGSGWTVLYYDNESGNLQIMTVENHFMNHIAELPVILIVDEFEHAYYLQYKNKRGDYLNAWWNVVNWDDAEKRLQKYLNK</sequence>
<protein>
    <recommendedName>
        <fullName>Superoxide dismutase [Fe]</fullName>
        <ecNumber>1.15.1.1</ecNumber>
    </recommendedName>
</protein>
<gene>
    <name type="primary">sod</name>
    <name type="synonym">sodF</name>
    <name type="ordered locus">Saci_0195</name>
</gene>
<proteinExistence type="evidence at protein level"/>
<name>SODF_SULAC</name>
<organism>
    <name type="scientific">Sulfolobus acidocaldarius (strain ATCC 33909 / DSM 639 / JCM 8929 / NBRC 15157 / NCIMB 11770)</name>
    <dbReference type="NCBI Taxonomy" id="330779"/>
    <lineage>
        <taxon>Archaea</taxon>
        <taxon>Thermoproteota</taxon>
        <taxon>Thermoprotei</taxon>
        <taxon>Sulfolobales</taxon>
        <taxon>Sulfolobaceae</taxon>
        <taxon>Sulfolobus</taxon>
    </lineage>
</organism>
<comment type="function">
    <text>Destroys superoxide anion radicals which are normally produced within the cells and which are toxic to biological systems.</text>
</comment>
<comment type="catalytic activity">
    <reaction>
        <text>2 superoxide + 2 H(+) = H2O2 + O2</text>
        <dbReference type="Rhea" id="RHEA:20696"/>
        <dbReference type="ChEBI" id="CHEBI:15378"/>
        <dbReference type="ChEBI" id="CHEBI:15379"/>
        <dbReference type="ChEBI" id="CHEBI:16240"/>
        <dbReference type="ChEBI" id="CHEBI:18421"/>
        <dbReference type="EC" id="1.15.1.1"/>
    </reaction>
</comment>
<comment type="cofactor">
    <cofactor>
        <name>Fe cation</name>
        <dbReference type="ChEBI" id="CHEBI:24875"/>
    </cofactor>
    <text>Binds 1 Fe cation per subunit.</text>
</comment>
<comment type="subunit">
    <text>Homotetramer at high temperature; homodimer at room temperature.</text>
</comment>
<comment type="subcellular location">
    <subcellularLocation>
        <location>Cytoplasm</location>
    </subcellularLocation>
</comment>
<comment type="similarity">
    <text evidence="1">Belongs to the iron/manganese superoxide dismutase family.</text>
</comment>